<dbReference type="EMBL" id="CP001277">
    <property type="protein sequence ID" value="ACQ68420.1"/>
    <property type="molecule type" value="Genomic_DNA"/>
</dbReference>
<dbReference type="RefSeq" id="WP_015874184.1">
    <property type="nucleotide sequence ID" value="NC_012751.1"/>
</dbReference>
<dbReference type="SMR" id="C4K777"/>
<dbReference type="STRING" id="572265.HDEF_1825"/>
<dbReference type="GeneID" id="66261412"/>
<dbReference type="KEGG" id="hde:HDEF_1825"/>
<dbReference type="eggNOG" id="COG0290">
    <property type="taxonomic scope" value="Bacteria"/>
</dbReference>
<dbReference type="HOGENOM" id="CLU_054919_3_2_6"/>
<dbReference type="Proteomes" id="UP000002334">
    <property type="component" value="Chromosome"/>
</dbReference>
<dbReference type="GO" id="GO:0005829">
    <property type="term" value="C:cytosol"/>
    <property type="evidence" value="ECO:0007669"/>
    <property type="project" value="TreeGrafter"/>
</dbReference>
<dbReference type="GO" id="GO:0016020">
    <property type="term" value="C:membrane"/>
    <property type="evidence" value="ECO:0007669"/>
    <property type="project" value="TreeGrafter"/>
</dbReference>
<dbReference type="GO" id="GO:0043022">
    <property type="term" value="F:ribosome binding"/>
    <property type="evidence" value="ECO:0007669"/>
    <property type="project" value="TreeGrafter"/>
</dbReference>
<dbReference type="GO" id="GO:0003743">
    <property type="term" value="F:translation initiation factor activity"/>
    <property type="evidence" value="ECO:0007669"/>
    <property type="project" value="UniProtKB-UniRule"/>
</dbReference>
<dbReference type="GO" id="GO:0032790">
    <property type="term" value="P:ribosome disassembly"/>
    <property type="evidence" value="ECO:0007669"/>
    <property type="project" value="TreeGrafter"/>
</dbReference>
<dbReference type="FunFam" id="3.10.20.80:FF:000001">
    <property type="entry name" value="Translation initiation factor IF-3"/>
    <property type="match status" value="1"/>
</dbReference>
<dbReference type="FunFam" id="3.30.110.10:FF:000001">
    <property type="entry name" value="Translation initiation factor IF-3"/>
    <property type="match status" value="1"/>
</dbReference>
<dbReference type="Gene3D" id="3.30.110.10">
    <property type="entry name" value="Translation initiation factor 3 (IF-3), C-terminal domain"/>
    <property type="match status" value="1"/>
</dbReference>
<dbReference type="Gene3D" id="3.10.20.80">
    <property type="entry name" value="Translation initiation factor 3 (IF-3), N-terminal domain"/>
    <property type="match status" value="1"/>
</dbReference>
<dbReference type="HAMAP" id="MF_00080">
    <property type="entry name" value="IF_3"/>
    <property type="match status" value="1"/>
</dbReference>
<dbReference type="InterPro" id="IPR036788">
    <property type="entry name" value="T_IF-3_C_sf"/>
</dbReference>
<dbReference type="InterPro" id="IPR036787">
    <property type="entry name" value="T_IF-3_N_sf"/>
</dbReference>
<dbReference type="InterPro" id="IPR019813">
    <property type="entry name" value="Translation_initiation_fac3_CS"/>
</dbReference>
<dbReference type="InterPro" id="IPR001288">
    <property type="entry name" value="Translation_initiation_fac_3"/>
</dbReference>
<dbReference type="InterPro" id="IPR019815">
    <property type="entry name" value="Translation_initiation_fac_3_C"/>
</dbReference>
<dbReference type="InterPro" id="IPR019814">
    <property type="entry name" value="Translation_initiation_fac_3_N"/>
</dbReference>
<dbReference type="NCBIfam" id="TIGR00168">
    <property type="entry name" value="infC"/>
    <property type="match status" value="1"/>
</dbReference>
<dbReference type="PANTHER" id="PTHR10938">
    <property type="entry name" value="TRANSLATION INITIATION FACTOR IF-3"/>
    <property type="match status" value="1"/>
</dbReference>
<dbReference type="PANTHER" id="PTHR10938:SF0">
    <property type="entry name" value="TRANSLATION INITIATION FACTOR IF-3, MITOCHONDRIAL"/>
    <property type="match status" value="1"/>
</dbReference>
<dbReference type="Pfam" id="PF00707">
    <property type="entry name" value="IF3_C"/>
    <property type="match status" value="1"/>
</dbReference>
<dbReference type="Pfam" id="PF05198">
    <property type="entry name" value="IF3_N"/>
    <property type="match status" value="1"/>
</dbReference>
<dbReference type="SUPFAM" id="SSF55200">
    <property type="entry name" value="Translation initiation factor IF3, C-terminal domain"/>
    <property type="match status" value="1"/>
</dbReference>
<dbReference type="SUPFAM" id="SSF54364">
    <property type="entry name" value="Translation initiation factor IF3, N-terminal domain"/>
    <property type="match status" value="1"/>
</dbReference>
<dbReference type="PROSITE" id="PS00938">
    <property type="entry name" value="IF3"/>
    <property type="match status" value="1"/>
</dbReference>
<accession>C4K777</accession>
<protein>
    <recommendedName>
        <fullName evidence="1">Translation initiation factor IF-3</fullName>
    </recommendedName>
</protein>
<keyword id="KW-0963">Cytoplasm</keyword>
<keyword id="KW-0396">Initiation factor</keyword>
<keyword id="KW-0648">Protein biosynthesis</keyword>
<reference key="1">
    <citation type="journal article" date="2009" name="Proc. Natl. Acad. Sci. U.S.A.">
        <title>Hamiltonella defensa, genome evolution of protective bacterial endosymbiont from pathogenic ancestors.</title>
        <authorList>
            <person name="Degnan P.H."/>
            <person name="Yu Y."/>
            <person name="Sisneros N."/>
            <person name="Wing R.A."/>
            <person name="Moran N.A."/>
        </authorList>
    </citation>
    <scope>NUCLEOTIDE SEQUENCE [LARGE SCALE GENOMIC DNA]</scope>
    <source>
        <strain>5AT</strain>
    </source>
</reference>
<name>IF3_HAMD5</name>
<evidence type="ECO:0000255" key="1">
    <source>
        <dbReference type="HAMAP-Rule" id="MF_00080"/>
    </source>
</evidence>
<feature type="chain" id="PRO_1000202540" description="Translation initiation factor IF-3">
    <location>
        <begin position="1"/>
        <end position="184"/>
    </location>
</feature>
<comment type="function">
    <text evidence="1">IF-3 binds to the 30S ribosomal subunit and shifts the equilibrium between 70S ribosomes and their 50S and 30S subunits in favor of the free subunits, thus enhancing the availability of 30S subunits on which protein synthesis initiation begins.</text>
</comment>
<comment type="subunit">
    <text evidence="1">Monomer.</text>
</comment>
<comment type="subcellular location">
    <subcellularLocation>
        <location evidence="1">Cytoplasm</location>
    </subcellularLocation>
</comment>
<comment type="similarity">
    <text evidence="1">Belongs to the IF-3 family.</text>
</comment>
<gene>
    <name evidence="1" type="primary">infC</name>
    <name type="ordered locus">HDEF_1825</name>
</gene>
<sequence length="184" mass="20959">MKPGKRVPLARPNRINKEIRVTEVRLTGIEGEQIGIVSIAVALQKAEEAGVDLVEISPNADPPVCRVMDYGKFLYEKSKSIKDQKKKQRVIQVKEVKFRPGTDEGDYQVKLRSLTRFLEEGDKAKITLRFRGREMAHQQIGMAMLERIRRDLCESENSIALVESFPARIEGRQISMVLAPKKKQ</sequence>
<proteinExistence type="inferred from homology"/>
<organism>
    <name type="scientific">Hamiltonella defensa subsp. Acyrthosiphon pisum (strain 5AT)</name>
    <dbReference type="NCBI Taxonomy" id="572265"/>
    <lineage>
        <taxon>Bacteria</taxon>
        <taxon>Pseudomonadati</taxon>
        <taxon>Pseudomonadota</taxon>
        <taxon>Gammaproteobacteria</taxon>
        <taxon>Enterobacterales</taxon>
        <taxon>Enterobacteriaceae</taxon>
        <taxon>aphid secondary symbionts</taxon>
        <taxon>Candidatus Hamiltonella</taxon>
    </lineage>
</organism>